<proteinExistence type="evidence at protein level"/>
<name>RIPR2_COTJA</name>
<evidence type="ECO:0000250" key="1">
    <source>
        <dbReference type="UniProtKB" id="Q7TP54"/>
    </source>
</evidence>
<evidence type="ECO:0000250" key="2">
    <source>
        <dbReference type="UniProtKB" id="Q80U16"/>
    </source>
</evidence>
<evidence type="ECO:0000250" key="3">
    <source>
        <dbReference type="UniProtKB" id="Q9Y4F9"/>
    </source>
</evidence>
<evidence type="ECO:0000255" key="4"/>
<evidence type="ECO:0000256" key="5">
    <source>
        <dbReference type="SAM" id="MobiDB-lite"/>
    </source>
</evidence>
<evidence type="ECO:0000269" key="6">
    <source>
    </source>
</evidence>
<evidence type="ECO:0000303" key="7">
    <source>
    </source>
</evidence>
<evidence type="ECO:0000305" key="8"/>
<accession>A9ZLX4</accession>
<accession>A9ZLZ2</accession>
<accession>A9ZLZ3</accession>
<protein>
    <recommendedName>
        <fullName evidence="3">Rho family-interacting cell polarization regulator 2</fullName>
    </recommendedName>
    <alternativeName>
        <fullName evidence="7">Myogenesis-related and NCAM-associated protein</fullName>
    </alternativeName>
</protein>
<reference key="1">
    <citation type="journal article" date="2008" name="Differentiation">
        <title>Identification and characterization of a novel neural cell adhesion molecule (NCAM)-associated protein from quail myoblasts: relationship to myotube formation and induction of neurite-like protrusions.</title>
        <authorList>
            <person name="Hirayama E."/>
            <person name="Kim J."/>
        </authorList>
    </citation>
    <scope>NUCLEOTIDE SEQUENCE [MRNA] (ISOFORMS 1; 2 AND 3)</scope>
    <scope>FUNCTION</scope>
    <scope>SUBCELLULAR LOCATION</scope>
    <scope>TISSUE SPECIFICITY</scope>
    <scope>INTERACTION WITH NCAM</scope>
    <scope>DOMAIN</scope>
</reference>
<feature type="chain" id="PRO_0000345986" description="Rho family-interacting cell polarization regulator 2">
    <location>
        <begin position="1"/>
        <end position="1072"/>
    </location>
</feature>
<feature type="region of interest" description="Necessary for interaction with NCAM and myoblast protrusion formation" evidence="6">
    <location>
        <begin position="173"/>
        <end position="470"/>
    </location>
</feature>
<feature type="region of interest" description="Disordered" evidence="5">
    <location>
        <begin position="439"/>
        <end position="465"/>
    </location>
</feature>
<feature type="region of interest" description="Disordered" evidence="5">
    <location>
        <begin position="683"/>
        <end position="718"/>
    </location>
</feature>
<feature type="coiled-coil region" evidence="4">
    <location>
        <begin position="83"/>
        <end position="112"/>
    </location>
</feature>
<feature type="compositionally biased region" description="Polar residues" evidence="5">
    <location>
        <begin position="447"/>
        <end position="460"/>
    </location>
</feature>
<feature type="compositionally biased region" description="Basic and acidic residues" evidence="5">
    <location>
        <begin position="683"/>
        <end position="698"/>
    </location>
</feature>
<feature type="splice variant" id="VSP_034969" description="In isoform 3." evidence="7">
    <original>M</original>
    <variation>MERRLCPRSPGLRRQRAKHVPGCAVSRGDTAIAAGISSRLPEIM</variation>
    <location>
        <position position="1"/>
    </location>
</feature>
<feature type="splice variant" id="VSP_034970" description="In isoform 3." evidence="7">
    <original>NGKQSWDGE</original>
    <variation>LKKPCKGFS</variation>
    <location>
        <begin position="243"/>
        <end position="251"/>
    </location>
</feature>
<feature type="splice variant" id="VSP_034971" description="In isoform 3." evidence="7">
    <location>
        <begin position="252"/>
        <end position="1072"/>
    </location>
</feature>
<feature type="splice variant" id="VSP_034972" description="In isoform 2." evidence="7">
    <location>
        <begin position="360"/>
        <end position="408"/>
    </location>
</feature>
<feature type="splice variant" id="VSP_034973" description="In isoform 2." evidence="7">
    <original>RAQTAAAVTPAEGKACPGVRCEPRGHGDSCQEYPPGF</original>
    <variation>LKSSESSSPDCSSSDSCRDSIPEPKDLPSPREAAATRNKATPRAHAEVC</variation>
    <location>
        <begin position="470"/>
        <end position="506"/>
    </location>
</feature>
<feature type="splice variant" id="VSP_034974" description="In isoform 2." evidence="7">
    <original>CKPAVSRSRSSSL</original>
    <variation>VSTFSESTTLEEI</variation>
    <location>
        <begin position="627"/>
        <end position="639"/>
    </location>
</feature>
<feature type="splice variant" id="VSP_034975" description="In isoform 2." evidence="7">
    <location>
        <begin position="640"/>
        <end position="1072"/>
    </location>
</feature>
<feature type="sequence conflict" description="In Ref. 1; BAF96642." evidence="8" ref="1">
    <original>T</original>
    <variation>A</variation>
    <location>
        <position position="168"/>
    </location>
</feature>
<feature type="sequence conflict" description="In Ref. 1; BAF96641." evidence="8" ref="1">
    <original>T</original>
    <variation>I</variation>
    <location>
        <position position="455"/>
    </location>
</feature>
<feature type="sequence conflict" description="In Ref. 1; BAF96641." evidence="8" ref="1">
    <original>R</original>
    <variation>C</variation>
    <location>
        <position position="516"/>
    </location>
</feature>
<feature type="sequence conflict" description="In Ref. 1; BAF96641." evidence="8" ref="1">
    <original>E</original>
    <variation>G</variation>
    <location>
        <position position="592"/>
    </location>
</feature>
<comment type="function">
    <text evidence="2 3 6">Acts as an inhibitor of the small GTPase RHOA and plays several roles in the regulation of myoblast and hair cell differentiation, lymphocyte T proliferation and neutrophil polarization. Plays a role in fetal mononuclear myoblast differentiation by promoting filopodia and myotube formation (PubMed:17825087). Maintains naive T lymphocytes in a quiescent state and prevents chemokine-induced T lymphocyte responses, such as cell adhesion, polarization and migration. Involved also in the regulation of neutrophil polarization, chemotaxis and adhesion. Required for normal development of inner and outer hair cell stereocilia within the cochlea of the inner ear. Plays a role for maintaining the structural organization of the basal domain of stereocilia. Involved in mechanosensory hair cell function. Required for normal hearing (By similarity).</text>
</comment>
<comment type="subunit">
    <text evidence="2 6">Homooligomer; homooligomerization is regulated by RHOC and leads to the formation of concatemers through the association of N- and C-termini. Interacts with NCAM; this interaction is necessary for myoblast protrusion formation (PubMed:17825087).</text>
</comment>
<comment type="subcellular location">
    <subcellularLocation>
        <location evidence="6">Cytoplasm</location>
    </subcellularLocation>
    <subcellularLocation>
        <location evidence="3">Cytoplasm</location>
        <location evidence="3">Cytoskeleton</location>
    </subcellularLocation>
    <subcellularLocation>
        <location evidence="3">Cell projection</location>
        <location evidence="3">Filopodium</location>
    </subcellularLocation>
    <subcellularLocation>
        <location evidence="1">Apical cell membrane</location>
    </subcellularLocation>
    <subcellularLocation>
        <location evidence="2">Cell projection</location>
        <location evidence="2">Stereocilium</location>
    </subcellularLocation>
    <subcellularLocation>
        <location evidence="1">Cell projection</location>
        <location evidence="1">Stereocilium membrane</location>
    </subcellularLocation>
</comment>
<comment type="alternative products">
    <event type="alternative splicing"/>
    <isoform>
        <id>A9ZLX4-1</id>
        <name>1</name>
        <sequence type="displayed"/>
    </isoform>
    <isoform>
        <id>A9ZLX4-2</id>
        <name>2</name>
        <sequence type="described" ref="VSP_034972 VSP_034973 VSP_034974 VSP_034975"/>
    </isoform>
    <isoform>
        <id>A9ZLX4-3</id>
        <name>3</name>
        <sequence type="described" ref="VSP_034969 VSP_034970 VSP_034971"/>
    </isoform>
</comment>
<comment type="tissue specificity">
    <text evidence="6">Expressed in myoblast and myotubes (at protein level). Expressed in brain, eyes and skeletal muscle.</text>
</comment>
<comment type="similarity">
    <text evidence="8">Belongs to the RIPOR family.</text>
</comment>
<keyword id="KW-0025">Alternative splicing</keyword>
<keyword id="KW-0130">Cell adhesion</keyword>
<keyword id="KW-1003">Cell membrane</keyword>
<keyword id="KW-0966">Cell projection</keyword>
<keyword id="KW-0145">Chemotaxis</keyword>
<keyword id="KW-0175">Coiled coil</keyword>
<keyword id="KW-0963">Cytoplasm</keyword>
<keyword id="KW-0206">Cytoskeleton</keyword>
<keyword id="KW-0221">Differentiation</keyword>
<keyword id="KW-1009">Hearing</keyword>
<keyword id="KW-0472">Membrane</keyword>
<keyword id="KW-0517">Myogenesis</keyword>
<keyword id="KW-1185">Reference proteome</keyword>
<keyword id="KW-0734">Signal transduction inhibitor</keyword>
<sequence length="1072" mass="119322">MSIGSHSFSPGGPNGIIRSQSFAGFSGLQERRSRCNSFIENTSALKKPQAKVKKMHNLGHKNSTTPKEPQPKRVEEVYRALKNGLDEYLEVHQTELDKLTAQLKDMRRNSRLGVLYDLDKQIKAVERYMRRLEFHISKVDELYEAYCIQRRLCDGASKMKQAFAMSPTSKAARESLTEINRSYKEYTENMCTIEAELENLLGEFCIKMKGLAGFARLCPGDQYEIFMRYGRQRWKLKGKIEVNGKQSWDGEEMVFLPLIVGLISIKVTEVKGLATHILVGSVTCETKDLFAARPQVVAVDINDLGTIKLNLEITWYPFDVEDLTPSTGNVSKASALQRRMSMYSQGTPETPTFKDHSFFRWLHPLQDRPRLAILDALQDTFFDKLRRSRSFSDLPSLRLSPKAGLELYSNLPDDVFENGTATTEKRPLSFTFGDLPYEDRVPPANSAEPSSAHVTSSPDIATTATQHRARAQTAAAVTPAEGKACPGVRCEPRGHGDSCQEYPPGFQKPSDTGSDRVFIEANVPVSLLQDTDEGSELKPVELDTYEGNITKQLVKRLTSAEVPGTPERLPCEGSISGESEGYKSYLDGSIEEALQGLLLALEPHKEQYKEFQDLDQEVMHLDDILKCKPAVSRSRSSSLSLTVESALESFDFLNTSDFDDEDGGGEEVCNGGGGADSVFSDTEVEKNSYRTEHPEARGHLQRSLTEDTGVGTSVAGSPLPLTTGSDSLDITIVKHLQYCTQLIQQIVFSRKTPFVTRDLLDKLSRQTLVMENIAEISTENLGSITSLTDAIPEFHKKLSLLAFWMKCTGPSGVYHTSADKMMKQLDINFAATVNEECPGLAETVFRILVSQILDRTEPVLYSTMSSEIITVFQYYNYFASHSVNDLGSYLLQLAKEASVVQMLQSVKDGKLQQNVSKINSNNLPPQQEVLRALALLLNENKNEVSETVASLLTATAENKHFREKALIYYCEALTQPNLQLQKAACLALRYLKATESIKMLVMLCQSDNEEIRKVASETLLSLGEDGRLAYEQLDNSPGNLSELEVAGELNLPQLSRRTCLSVTATEEGWSCH</sequence>
<gene>
    <name evidence="3" type="primary">RIPOR2</name>
    <name type="synonym">FAM65B</name>
    <name evidence="7" type="synonym">MYONAP</name>
</gene>
<dbReference type="EMBL" id="AB128922">
    <property type="protein sequence ID" value="BAF96640.1"/>
    <property type="molecule type" value="mRNA"/>
</dbReference>
<dbReference type="EMBL" id="AB169974">
    <property type="protein sequence ID" value="BAF96641.1"/>
    <property type="molecule type" value="mRNA"/>
</dbReference>
<dbReference type="EMBL" id="AB182319">
    <property type="protein sequence ID" value="BAF96642.1"/>
    <property type="molecule type" value="mRNA"/>
</dbReference>
<dbReference type="OrthoDB" id="9999654at2759"/>
<dbReference type="Proteomes" id="UP000694412">
    <property type="component" value="Unplaced"/>
</dbReference>
<dbReference type="GO" id="GO:0016324">
    <property type="term" value="C:apical plasma membrane"/>
    <property type="evidence" value="ECO:0007669"/>
    <property type="project" value="UniProtKB-SubCell"/>
</dbReference>
<dbReference type="GO" id="GO:0005737">
    <property type="term" value="C:cytoplasm"/>
    <property type="evidence" value="ECO:0000314"/>
    <property type="project" value="UniProtKB"/>
</dbReference>
<dbReference type="GO" id="GO:0005856">
    <property type="term" value="C:cytoskeleton"/>
    <property type="evidence" value="ECO:0000250"/>
    <property type="project" value="UniProtKB"/>
</dbReference>
<dbReference type="GO" id="GO:0030175">
    <property type="term" value="C:filopodium"/>
    <property type="evidence" value="ECO:0000250"/>
    <property type="project" value="UniProtKB"/>
</dbReference>
<dbReference type="GO" id="GO:0032420">
    <property type="term" value="C:stereocilium"/>
    <property type="evidence" value="ECO:0000250"/>
    <property type="project" value="UniProtKB"/>
</dbReference>
<dbReference type="GO" id="GO:0060171">
    <property type="term" value="C:stereocilium membrane"/>
    <property type="evidence" value="ECO:0007669"/>
    <property type="project" value="UniProtKB-SubCell"/>
</dbReference>
<dbReference type="GO" id="GO:0071889">
    <property type="term" value="F:14-3-3 protein binding"/>
    <property type="evidence" value="ECO:0000250"/>
    <property type="project" value="UniProtKB"/>
</dbReference>
<dbReference type="GO" id="GO:0007155">
    <property type="term" value="P:cell adhesion"/>
    <property type="evidence" value="ECO:0007669"/>
    <property type="project" value="UniProtKB-KW"/>
</dbReference>
<dbReference type="GO" id="GO:0030154">
    <property type="term" value="P:cell differentiation"/>
    <property type="evidence" value="ECO:0007669"/>
    <property type="project" value="UniProtKB-KW"/>
</dbReference>
<dbReference type="GO" id="GO:1990869">
    <property type="term" value="P:cellular response to chemokine"/>
    <property type="evidence" value="ECO:0000250"/>
    <property type="project" value="UniProtKB"/>
</dbReference>
<dbReference type="GO" id="GO:0006935">
    <property type="term" value="P:chemotaxis"/>
    <property type="evidence" value="ECO:0007669"/>
    <property type="project" value="UniProtKB-KW"/>
</dbReference>
<dbReference type="GO" id="GO:0007517">
    <property type="term" value="P:muscle organ development"/>
    <property type="evidence" value="ECO:0007669"/>
    <property type="project" value="UniProtKB-KW"/>
</dbReference>
<dbReference type="GO" id="GO:0007162">
    <property type="term" value="P:negative regulation of cell adhesion"/>
    <property type="evidence" value="ECO:0000250"/>
    <property type="project" value="UniProtKB"/>
</dbReference>
<dbReference type="GO" id="GO:1903904">
    <property type="term" value="P:negative regulation of establishment of T cell polarity"/>
    <property type="evidence" value="ECO:0000250"/>
    <property type="project" value="UniProtKB"/>
</dbReference>
<dbReference type="GO" id="GO:1905872">
    <property type="term" value="P:negative regulation of protein localization to cell leading edge"/>
    <property type="evidence" value="ECO:0000250"/>
    <property type="project" value="UniProtKB"/>
</dbReference>
<dbReference type="GO" id="GO:2001107">
    <property type="term" value="P:negative regulation of Rho guanyl-nucleotide exchange factor activity"/>
    <property type="evidence" value="ECO:0000250"/>
    <property type="project" value="UniProtKB"/>
</dbReference>
<dbReference type="GO" id="GO:0035024">
    <property type="term" value="P:negative regulation of Rho protein signal transduction"/>
    <property type="evidence" value="ECO:0000250"/>
    <property type="project" value="UniProtKB"/>
</dbReference>
<dbReference type="GO" id="GO:2000405">
    <property type="term" value="P:negative regulation of T cell migration"/>
    <property type="evidence" value="ECO:0000250"/>
    <property type="project" value="UniProtKB"/>
</dbReference>
<dbReference type="GO" id="GO:0051491">
    <property type="term" value="P:positive regulation of filopodium assembly"/>
    <property type="evidence" value="ECO:0000315"/>
    <property type="project" value="UniProtKB"/>
</dbReference>
<dbReference type="GO" id="GO:0045663">
    <property type="term" value="P:positive regulation of myoblast differentiation"/>
    <property type="evidence" value="ECO:0000315"/>
    <property type="project" value="UniProtKB"/>
</dbReference>
<dbReference type="GO" id="GO:1901741">
    <property type="term" value="P:positive regulation of myoblast fusion"/>
    <property type="evidence" value="ECO:0000315"/>
    <property type="project" value="UniProtKB"/>
</dbReference>
<dbReference type="GO" id="GO:0090023">
    <property type="term" value="P:positive regulation of neutrophil chemotaxis"/>
    <property type="evidence" value="ECO:0000250"/>
    <property type="project" value="UniProtKB"/>
</dbReference>
<dbReference type="GO" id="GO:2000391">
    <property type="term" value="P:positive regulation of neutrophil extravasation"/>
    <property type="evidence" value="ECO:0000250"/>
    <property type="project" value="UniProtKB"/>
</dbReference>
<dbReference type="GO" id="GO:2000114">
    <property type="term" value="P:regulation of establishment of cell polarity"/>
    <property type="evidence" value="ECO:0000250"/>
    <property type="project" value="UniProtKB"/>
</dbReference>
<dbReference type="GO" id="GO:0007605">
    <property type="term" value="P:sensory perception of sound"/>
    <property type="evidence" value="ECO:0000250"/>
    <property type="project" value="UniProtKB"/>
</dbReference>
<dbReference type="FunFam" id="1.25.10.10:FF:000191">
    <property type="entry name" value="RHO family interacting cell polarization regulator 2"/>
    <property type="match status" value="1"/>
</dbReference>
<dbReference type="Gene3D" id="1.25.10.10">
    <property type="entry name" value="Leucine-rich Repeat Variant"/>
    <property type="match status" value="1"/>
</dbReference>
<dbReference type="InterPro" id="IPR011989">
    <property type="entry name" value="ARM-like"/>
</dbReference>
<dbReference type="InterPro" id="IPR016024">
    <property type="entry name" value="ARM-type_fold"/>
</dbReference>
<dbReference type="InterPro" id="IPR031780">
    <property type="entry name" value="FAM65_N"/>
</dbReference>
<dbReference type="InterPro" id="IPR026136">
    <property type="entry name" value="RIPOR3"/>
</dbReference>
<dbReference type="PANTHER" id="PTHR15829">
    <property type="entry name" value="PROTEIN KINASE PKN/PRK1, EFFECTOR"/>
    <property type="match status" value="1"/>
</dbReference>
<dbReference type="PANTHER" id="PTHR15829:SF2">
    <property type="entry name" value="RHO FAMILY-INTERACTING CELL POLARIZATION REGULATOR 2"/>
    <property type="match status" value="1"/>
</dbReference>
<dbReference type="Pfam" id="PF15903">
    <property type="entry name" value="PL48"/>
    <property type="match status" value="1"/>
</dbReference>
<dbReference type="SUPFAM" id="SSF48371">
    <property type="entry name" value="ARM repeat"/>
    <property type="match status" value="1"/>
</dbReference>
<organism>
    <name type="scientific">Coturnix japonica</name>
    <name type="common">Japanese quail</name>
    <name type="synonym">Coturnix coturnix japonica</name>
    <dbReference type="NCBI Taxonomy" id="93934"/>
    <lineage>
        <taxon>Eukaryota</taxon>
        <taxon>Metazoa</taxon>
        <taxon>Chordata</taxon>
        <taxon>Craniata</taxon>
        <taxon>Vertebrata</taxon>
        <taxon>Euteleostomi</taxon>
        <taxon>Archelosauria</taxon>
        <taxon>Archosauria</taxon>
        <taxon>Dinosauria</taxon>
        <taxon>Saurischia</taxon>
        <taxon>Theropoda</taxon>
        <taxon>Coelurosauria</taxon>
        <taxon>Aves</taxon>
        <taxon>Neognathae</taxon>
        <taxon>Galloanserae</taxon>
        <taxon>Galliformes</taxon>
        <taxon>Phasianidae</taxon>
        <taxon>Perdicinae</taxon>
        <taxon>Coturnix</taxon>
    </lineage>
</organism>